<protein>
    <recommendedName>
        <fullName evidence="1">Cytoplasmic tRNA 2-thiolation protein 2</fullName>
    </recommendedName>
</protein>
<dbReference type="EMBL" id="CR382126">
    <property type="protein sequence ID" value="CAG98857.1"/>
    <property type="molecule type" value="Genomic_DNA"/>
</dbReference>
<dbReference type="RefSeq" id="XP_456149.1">
    <property type="nucleotide sequence ID" value="XM_456149.1"/>
</dbReference>
<dbReference type="FunCoup" id="Q6CIU0">
    <property type="interactions" value="204"/>
</dbReference>
<dbReference type="STRING" id="284590.Q6CIU0"/>
<dbReference type="PaxDb" id="284590-Q6CIU0"/>
<dbReference type="KEGG" id="kla:KLLA0_F24002g"/>
<dbReference type="eggNOG" id="KOG2594">
    <property type="taxonomic scope" value="Eukaryota"/>
</dbReference>
<dbReference type="HOGENOM" id="CLU_024534_1_0_1"/>
<dbReference type="InParanoid" id="Q6CIU0"/>
<dbReference type="OMA" id="KQRKQMM"/>
<dbReference type="UniPathway" id="UPA00988"/>
<dbReference type="Proteomes" id="UP000000598">
    <property type="component" value="Chromosome F"/>
</dbReference>
<dbReference type="GO" id="GO:0005829">
    <property type="term" value="C:cytosol"/>
    <property type="evidence" value="ECO:0000250"/>
    <property type="project" value="UniProtKB"/>
</dbReference>
<dbReference type="GO" id="GO:0016779">
    <property type="term" value="F:nucleotidyltransferase activity"/>
    <property type="evidence" value="ECO:0007669"/>
    <property type="project" value="UniProtKB-UniRule"/>
</dbReference>
<dbReference type="GO" id="GO:0016783">
    <property type="term" value="F:sulfurtransferase activity"/>
    <property type="evidence" value="ECO:0007669"/>
    <property type="project" value="TreeGrafter"/>
</dbReference>
<dbReference type="GO" id="GO:0000049">
    <property type="term" value="F:tRNA binding"/>
    <property type="evidence" value="ECO:0007669"/>
    <property type="project" value="InterPro"/>
</dbReference>
<dbReference type="GO" id="GO:0032447">
    <property type="term" value="P:protein urmylation"/>
    <property type="evidence" value="ECO:0007669"/>
    <property type="project" value="UniProtKB-UniRule"/>
</dbReference>
<dbReference type="GO" id="GO:0034227">
    <property type="term" value="P:tRNA thio-modification"/>
    <property type="evidence" value="ECO:0000250"/>
    <property type="project" value="UniProtKB"/>
</dbReference>
<dbReference type="GO" id="GO:0002143">
    <property type="term" value="P:tRNA wobble position uridine thiolation"/>
    <property type="evidence" value="ECO:0007669"/>
    <property type="project" value="TreeGrafter"/>
</dbReference>
<dbReference type="GO" id="GO:0002098">
    <property type="term" value="P:tRNA wobble uridine modification"/>
    <property type="evidence" value="ECO:0000250"/>
    <property type="project" value="UniProtKB"/>
</dbReference>
<dbReference type="Gene3D" id="3.40.50.620">
    <property type="entry name" value="HUPs"/>
    <property type="match status" value="1"/>
</dbReference>
<dbReference type="HAMAP" id="MF_03054">
    <property type="entry name" value="CTU2"/>
    <property type="match status" value="1"/>
</dbReference>
<dbReference type="InterPro" id="IPR019407">
    <property type="entry name" value="CTU2"/>
</dbReference>
<dbReference type="InterPro" id="IPR014729">
    <property type="entry name" value="Rossmann-like_a/b/a_fold"/>
</dbReference>
<dbReference type="PANTHER" id="PTHR20882">
    <property type="entry name" value="CYTOPLASMIC TRNA 2-THIOLATION PROTEIN 2"/>
    <property type="match status" value="1"/>
</dbReference>
<dbReference type="PANTHER" id="PTHR20882:SF14">
    <property type="entry name" value="CYTOPLASMIC TRNA 2-THIOLATION PROTEIN 2"/>
    <property type="match status" value="1"/>
</dbReference>
<dbReference type="Pfam" id="PF10288">
    <property type="entry name" value="CTU2"/>
    <property type="match status" value="1"/>
</dbReference>
<dbReference type="SUPFAM" id="SSF52402">
    <property type="entry name" value="Adenine nucleotide alpha hydrolases-like"/>
    <property type="match status" value="1"/>
</dbReference>
<accession>Q6CIU0</accession>
<feature type="chain" id="PRO_0000369296" description="Cytoplasmic tRNA 2-thiolation protein 2">
    <location>
        <begin position="1"/>
        <end position="463"/>
    </location>
</feature>
<sequence length="463" mass="52840">MVICKRCKLLDATLVSRKEPFCDECFVKFISLKQRKQMMSDDYFQDIFKISYPDKKRGQAEADKQNQDSNVLVPLSLGSSSLAVLDILNDTLLEQKQTHRGKTGFHVEVITICGQAEFEEVRGKIELLKSKYKENSDKILFHIVDRNQFFAVPFDLQEITLYIDNFNTLVRSSNNPSTTVEKVLASAPNKTAKEDLLNIIYTHLIKKFALQRNFKAILWGHSMTKLADEVISLTVKGRGAEIAGYLDDSSLDSKYNTAFRNFHPGRDVLLSEIDAYCHIKGLSQFSHNYVVQDTLFYDKFVDKPTKNVKLIKNMTMNELARQYFDNIEGDYSNVISTVVRTGAKLSNPDNELNQIMHCSICNAIIYKNPVNWLDGITVSKPFVIHNEEELTNYNAWEAANPDKAEKLNKMSDTPAKNVGVCYGCITTLTGMKDRKLEWIRRDDKAELTAVLQEYEIPSDDSEQ</sequence>
<organism>
    <name type="scientific">Kluyveromyces lactis (strain ATCC 8585 / CBS 2359 / DSM 70799 / NBRC 1267 / NRRL Y-1140 / WM37)</name>
    <name type="common">Yeast</name>
    <name type="synonym">Candida sphaerica</name>
    <dbReference type="NCBI Taxonomy" id="284590"/>
    <lineage>
        <taxon>Eukaryota</taxon>
        <taxon>Fungi</taxon>
        <taxon>Dikarya</taxon>
        <taxon>Ascomycota</taxon>
        <taxon>Saccharomycotina</taxon>
        <taxon>Saccharomycetes</taxon>
        <taxon>Saccharomycetales</taxon>
        <taxon>Saccharomycetaceae</taxon>
        <taxon>Kluyveromyces</taxon>
    </lineage>
</organism>
<evidence type="ECO:0000255" key="1">
    <source>
        <dbReference type="HAMAP-Rule" id="MF_03054"/>
    </source>
</evidence>
<reference key="1">
    <citation type="journal article" date="2004" name="Nature">
        <title>Genome evolution in yeasts.</title>
        <authorList>
            <person name="Dujon B."/>
            <person name="Sherman D."/>
            <person name="Fischer G."/>
            <person name="Durrens P."/>
            <person name="Casaregola S."/>
            <person name="Lafontaine I."/>
            <person name="de Montigny J."/>
            <person name="Marck C."/>
            <person name="Neuveglise C."/>
            <person name="Talla E."/>
            <person name="Goffard N."/>
            <person name="Frangeul L."/>
            <person name="Aigle M."/>
            <person name="Anthouard V."/>
            <person name="Babour A."/>
            <person name="Barbe V."/>
            <person name="Barnay S."/>
            <person name="Blanchin S."/>
            <person name="Beckerich J.-M."/>
            <person name="Beyne E."/>
            <person name="Bleykasten C."/>
            <person name="Boisrame A."/>
            <person name="Boyer J."/>
            <person name="Cattolico L."/>
            <person name="Confanioleri F."/>
            <person name="de Daruvar A."/>
            <person name="Despons L."/>
            <person name="Fabre E."/>
            <person name="Fairhead C."/>
            <person name="Ferry-Dumazet H."/>
            <person name="Groppi A."/>
            <person name="Hantraye F."/>
            <person name="Hennequin C."/>
            <person name="Jauniaux N."/>
            <person name="Joyet P."/>
            <person name="Kachouri R."/>
            <person name="Kerrest A."/>
            <person name="Koszul R."/>
            <person name="Lemaire M."/>
            <person name="Lesur I."/>
            <person name="Ma L."/>
            <person name="Muller H."/>
            <person name="Nicaud J.-M."/>
            <person name="Nikolski M."/>
            <person name="Oztas S."/>
            <person name="Ozier-Kalogeropoulos O."/>
            <person name="Pellenz S."/>
            <person name="Potier S."/>
            <person name="Richard G.-F."/>
            <person name="Straub M.-L."/>
            <person name="Suleau A."/>
            <person name="Swennen D."/>
            <person name="Tekaia F."/>
            <person name="Wesolowski-Louvel M."/>
            <person name="Westhof E."/>
            <person name="Wirth B."/>
            <person name="Zeniou-Meyer M."/>
            <person name="Zivanovic Y."/>
            <person name="Bolotin-Fukuhara M."/>
            <person name="Thierry A."/>
            <person name="Bouchier C."/>
            <person name="Caudron B."/>
            <person name="Scarpelli C."/>
            <person name="Gaillardin C."/>
            <person name="Weissenbach J."/>
            <person name="Wincker P."/>
            <person name="Souciet J.-L."/>
        </authorList>
    </citation>
    <scope>NUCLEOTIDE SEQUENCE [LARGE SCALE GENOMIC DNA]</scope>
    <source>
        <strain>ATCC 8585 / CBS 2359 / DSM 70799 / NBRC 1267 / NRRL Y-1140 / WM37</strain>
    </source>
</reference>
<gene>
    <name evidence="1" type="primary">NCS2</name>
    <name evidence="1" type="synonym">CTU2</name>
    <name type="ordered locus">KLLA0F24002g</name>
</gene>
<name>CTU2_KLULA</name>
<proteinExistence type="inferred from homology"/>
<comment type="function">
    <text evidence="1">Plays a central role in 2-thiolation of mcm(5)S(2)U at tRNA wobble positions of tRNA(Lys), tRNA(Glu) and tRNA(Gln). May act by forming a heterodimer with NCS6 that ligates sulfur from thiocarboxylated URM1 onto the uridine of tRNAs at wobble position. Prior mcm(5) tRNA modification by the elongator complex is required for 2-thiolation. May also be involved in protein urmylation.</text>
</comment>
<comment type="pathway">
    <text evidence="1">tRNA modification; 5-methoxycarbonylmethyl-2-thiouridine-tRNA biosynthesis.</text>
</comment>
<comment type="subcellular location">
    <subcellularLocation>
        <location evidence="1">Cytoplasm</location>
    </subcellularLocation>
</comment>
<comment type="similarity">
    <text evidence="1">Belongs to the CTU2/NCS2 family.</text>
</comment>
<keyword id="KW-0963">Cytoplasm</keyword>
<keyword id="KW-1185">Reference proteome</keyword>
<keyword id="KW-0819">tRNA processing</keyword>